<name>GUAA_WOLTR</name>
<proteinExistence type="inferred from homology"/>
<accession>Q5GSJ3</accession>
<reference key="1">
    <citation type="journal article" date="2005" name="PLoS Biol.">
        <title>The Wolbachia genome of Brugia malayi: endosymbiont evolution within a human pathogenic nematode.</title>
        <authorList>
            <person name="Foster J."/>
            <person name="Ganatra M."/>
            <person name="Kamal I."/>
            <person name="Ware J."/>
            <person name="Makarova K."/>
            <person name="Ivanova N."/>
            <person name="Bhattacharyya A."/>
            <person name="Kapatral V."/>
            <person name="Kumar S."/>
            <person name="Posfai J."/>
            <person name="Vincze T."/>
            <person name="Ingram J."/>
            <person name="Moran L."/>
            <person name="Lapidus A."/>
            <person name="Omelchenko M."/>
            <person name="Kyrpides N."/>
            <person name="Ghedin E."/>
            <person name="Wang S."/>
            <person name="Goltsman E."/>
            <person name="Joukov V."/>
            <person name="Ostrovskaya O."/>
            <person name="Tsukerman K."/>
            <person name="Mazur M."/>
            <person name="Comb D."/>
            <person name="Koonin E."/>
            <person name="Slatko B."/>
        </authorList>
    </citation>
    <scope>NUCLEOTIDE SEQUENCE [LARGE SCALE GENOMIC DNA]</scope>
    <source>
        <strain>TRS</strain>
    </source>
</reference>
<dbReference type="EC" id="6.3.5.2" evidence="1"/>
<dbReference type="EMBL" id="AE017321">
    <property type="protein sequence ID" value="AAW71031.1"/>
    <property type="molecule type" value="Genomic_DNA"/>
</dbReference>
<dbReference type="RefSeq" id="WP_011256641.1">
    <property type="nucleotide sequence ID" value="NC_006833.1"/>
</dbReference>
<dbReference type="SMR" id="Q5GSJ3"/>
<dbReference type="STRING" id="292805.Wbm0443"/>
<dbReference type="KEGG" id="wbm:Wbm0443"/>
<dbReference type="eggNOG" id="COG0518">
    <property type="taxonomic scope" value="Bacteria"/>
</dbReference>
<dbReference type="eggNOG" id="COG0519">
    <property type="taxonomic scope" value="Bacteria"/>
</dbReference>
<dbReference type="HOGENOM" id="CLU_014340_0_5_5"/>
<dbReference type="UniPathway" id="UPA00189">
    <property type="reaction ID" value="UER00296"/>
</dbReference>
<dbReference type="Proteomes" id="UP000000534">
    <property type="component" value="Chromosome"/>
</dbReference>
<dbReference type="GO" id="GO:0005829">
    <property type="term" value="C:cytosol"/>
    <property type="evidence" value="ECO:0007669"/>
    <property type="project" value="TreeGrafter"/>
</dbReference>
<dbReference type="GO" id="GO:0005524">
    <property type="term" value="F:ATP binding"/>
    <property type="evidence" value="ECO:0007669"/>
    <property type="project" value="UniProtKB-UniRule"/>
</dbReference>
<dbReference type="GO" id="GO:0003921">
    <property type="term" value="F:GMP synthase activity"/>
    <property type="evidence" value="ECO:0007669"/>
    <property type="project" value="InterPro"/>
</dbReference>
<dbReference type="CDD" id="cd01742">
    <property type="entry name" value="GATase1_GMP_Synthase"/>
    <property type="match status" value="1"/>
</dbReference>
<dbReference type="CDD" id="cd01997">
    <property type="entry name" value="GMP_synthase_C"/>
    <property type="match status" value="1"/>
</dbReference>
<dbReference type="FunFam" id="3.30.300.10:FF:000002">
    <property type="entry name" value="GMP synthase [glutamine-hydrolyzing]"/>
    <property type="match status" value="1"/>
</dbReference>
<dbReference type="Gene3D" id="3.30.300.10">
    <property type="match status" value="1"/>
</dbReference>
<dbReference type="Gene3D" id="3.40.50.880">
    <property type="match status" value="1"/>
</dbReference>
<dbReference type="Gene3D" id="3.40.50.620">
    <property type="entry name" value="HUPs"/>
    <property type="match status" value="1"/>
</dbReference>
<dbReference type="HAMAP" id="MF_00344">
    <property type="entry name" value="GMP_synthase"/>
    <property type="match status" value="1"/>
</dbReference>
<dbReference type="InterPro" id="IPR029062">
    <property type="entry name" value="Class_I_gatase-like"/>
</dbReference>
<dbReference type="InterPro" id="IPR017926">
    <property type="entry name" value="GATASE"/>
</dbReference>
<dbReference type="InterPro" id="IPR001674">
    <property type="entry name" value="GMP_synth_C"/>
</dbReference>
<dbReference type="InterPro" id="IPR004739">
    <property type="entry name" value="GMP_synth_GATase"/>
</dbReference>
<dbReference type="InterPro" id="IPR022955">
    <property type="entry name" value="GMP_synthase"/>
</dbReference>
<dbReference type="InterPro" id="IPR025777">
    <property type="entry name" value="GMPS_ATP_PPase_dom"/>
</dbReference>
<dbReference type="InterPro" id="IPR014729">
    <property type="entry name" value="Rossmann-like_a/b/a_fold"/>
</dbReference>
<dbReference type="NCBIfam" id="TIGR00884">
    <property type="entry name" value="guaA_Cterm"/>
    <property type="match status" value="1"/>
</dbReference>
<dbReference type="NCBIfam" id="TIGR00888">
    <property type="entry name" value="guaA_Nterm"/>
    <property type="match status" value="1"/>
</dbReference>
<dbReference type="NCBIfam" id="NF000848">
    <property type="entry name" value="PRK00074.1"/>
    <property type="match status" value="1"/>
</dbReference>
<dbReference type="PANTHER" id="PTHR11922:SF2">
    <property type="entry name" value="GMP SYNTHASE [GLUTAMINE-HYDROLYZING]"/>
    <property type="match status" value="1"/>
</dbReference>
<dbReference type="PANTHER" id="PTHR11922">
    <property type="entry name" value="GMP SYNTHASE-RELATED"/>
    <property type="match status" value="1"/>
</dbReference>
<dbReference type="Pfam" id="PF00117">
    <property type="entry name" value="GATase"/>
    <property type="match status" value="1"/>
</dbReference>
<dbReference type="Pfam" id="PF00958">
    <property type="entry name" value="GMP_synt_C"/>
    <property type="match status" value="1"/>
</dbReference>
<dbReference type="PRINTS" id="PR00096">
    <property type="entry name" value="GATASE"/>
</dbReference>
<dbReference type="SUPFAM" id="SSF52402">
    <property type="entry name" value="Adenine nucleotide alpha hydrolases-like"/>
    <property type="match status" value="1"/>
</dbReference>
<dbReference type="SUPFAM" id="SSF52317">
    <property type="entry name" value="Class I glutamine amidotransferase-like"/>
    <property type="match status" value="1"/>
</dbReference>
<dbReference type="SUPFAM" id="SSF54810">
    <property type="entry name" value="GMP synthetase C-terminal dimerisation domain"/>
    <property type="match status" value="1"/>
</dbReference>
<dbReference type="PROSITE" id="PS51273">
    <property type="entry name" value="GATASE_TYPE_1"/>
    <property type="match status" value="1"/>
</dbReference>
<dbReference type="PROSITE" id="PS51553">
    <property type="entry name" value="GMPS_ATP_PPASE"/>
    <property type="match status" value="1"/>
</dbReference>
<organism>
    <name type="scientific">Wolbachia sp. subsp. Brugia malayi (strain TRS)</name>
    <dbReference type="NCBI Taxonomy" id="292805"/>
    <lineage>
        <taxon>Bacteria</taxon>
        <taxon>Pseudomonadati</taxon>
        <taxon>Pseudomonadota</taxon>
        <taxon>Alphaproteobacteria</taxon>
        <taxon>Rickettsiales</taxon>
        <taxon>Anaplasmataceae</taxon>
        <taxon>Wolbachieae</taxon>
        <taxon>Wolbachia</taxon>
    </lineage>
</organism>
<sequence length="520" mass="57968">MSAIAIIDFGSQFTQLIARQIREMDVYCEIFPSNISFETISKFNGFILSGGPQSVHDGCSEASGVAHEIIKFNEATNVPILGICYGQQLICHYFGAKVKKEFKQEFCKTKIKILKESSIVKDVWNVNSEVDVLMNHADSVETAPQGFTVIASGVINQTIAIVANEQRRIYCTQFHPEVKPTANGSKLLSNFLDIANCKRDWTMKSIIEKQKEKIKNVVGEKKVIAAVSGGVDSSVAVALTYKAVGKQLNCIFIDTGLLRKNQTIALLEEIPVNYVDKSNLFLSRLKGITDPEEKRKIIGNTFIEVFEEEAKKIGNADFLMQGTIYSDVVESGHASGNASTIKSHHNVGGLPEKMNLKLVEPLRYLFKDEVRLLGKEIGLSNEIIFQHPFPGPGLAVRVIGEVDEERVRILQEIDEIYINTMKNYDLYDKIWQAFAVLLPIRTVGVMGDGRTYGYVCALRAVTSFDGMTADAFPFENKSQHSLIFWDFLQNVSSIIVNNVSGVNRVVYDLTSKPPATIEWE</sequence>
<feature type="chain" id="PRO_0000229486" description="GMP synthase [glutamine-hydrolyzing]">
    <location>
        <begin position="1"/>
        <end position="520"/>
    </location>
</feature>
<feature type="domain" description="Glutamine amidotransferase type-1" evidence="1">
    <location>
        <begin position="3"/>
        <end position="200"/>
    </location>
</feature>
<feature type="domain" description="GMPS ATP-PPase" evidence="1">
    <location>
        <begin position="201"/>
        <end position="386"/>
    </location>
</feature>
<feature type="active site" description="Nucleophile" evidence="1">
    <location>
        <position position="84"/>
    </location>
</feature>
<feature type="active site" evidence="1">
    <location>
        <position position="175"/>
    </location>
</feature>
<feature type="active site" evidence="1">
    <location>
        <position position="177"/>
    </location>
</feature>
<feature type="binding site" evidence="1">
    <location>
        <begin position="228"/>
        <end position="234"/>
    </location>
    <ligand>
        <name>ATP</name>
        <dbReference type="ChEBI" id="CHEBI:30616"/>
    </ligand>
</feature>
<gene>
    <name evidence="1" type="primary">guaA</name>
    <name type="ordered locus">Wbm0443</name>
</gene>
<keyword id="KW-0067">ATP-binding</keyword>
<keyword id="KW-0315">Glutamine amidotransferase</keyword>
<keyword id="KW-0332">GMP biosynthesis</keyword>
<keyword id="KW-0436">Ligase</keyword>
<keyword id="KW-0547">Nucleotide-binding</keyword>
<keyword id="KW-0658">Purine biosynthesis</keyword>
<keyword id="KW-1185">Reference proteome</keyword>
<evidence type="ECO:0000255" key="1">
    <source>
        <dbReference type="HAMAP-Rule" id="MF_00344"/>
    </source>
</evidence>
<comment type="function">
    <text evidence="1">Catalyzes the synthesis of GMP from XMP.</text>
</comment>
<comment type="catalytic activity">
    <reaction evidence="1">
        <text>XMP + L-glutamine + ATP + H2O = GMP + L-glutamate + AMP + diphosphate + 2 H(+)</text>
        <dbReference type="Rhea" id="RHEA:11680"/>
        <dbReference type="ChEBI" id="CHEBI:15377"/>
        <dbReference type="ChEBI" id="CHEBI:15378"/>
        <dbReference type="ChEBI" id="CHEBI:29985"/>
        <dbReference type="ChEBI" id="CHEBI:30616"/>
        <dbReference type="ChEBI" id="CHEBI:33019"/>
        <dbReference type="ChEBI" id="CHEBI:57464"/>
        <dbReference type="ChEBI" id="CHEBI:58115"/>
        <dbReference type="ChEBI" id="CHEBI:58359"/>
        <dbReference type="ChEBI" id="CHEBI:456215"/>
        <dbReference type="EC" id="6.3.5.2"/>
    </reaction>
</comment>
<comment type="pathway">
    <text evidence="1">Purine metabolism; GMP biosynthesis; GMP from XMP (L-Gln route): step 1/1.</text>
</comment>
<comment type="subunit">
    <text evidence="1">Homodimer.</text>
</comment>
<protein>
    <recommendedName>
        <fullName evidence="1">GMP synthase [glutamine-hydrolyzing]</fullName>
        <ecNumber evidence="1">6.3.5.2</ecNumber>
    </recommendedName>
    <alternativeName>
        <fullName evidence="1">GMP synthetase</fullName>
    </alternativeName>
    <alternativeName>
        <fullName evidence="1">Glutamine amidotransferase</fullName>
    </alternativeName>
</protein>